<gene>
    <name type="ordered locus">NGO_1291</name>
</gene>
<evidence type="ECO:0000255" key="1">
    <source>
        <dbReference type="HAMAP-Rule" id="MF_00693"/>
    </source>
</evidence>
<organism>
    <name type="scientific">Neisseria gonorrhoeae (strain ATCC 700825 / FA 1090)</name>
    <dbReference type="NCBI Taxonomy" id="242231"/>
    <lineage>
        <taxon>Bacteria</taxon>
        <taxon>Pseudomonadati</taxon>
        <taxon>Pseudomonadota</taxon>
        <taxon>Betaproteobacteria</taxon>
        <taxon>Neisseriales</taxon>
        <taxon>Neisseriaceae</taxon>
        <taxon>Neisseria</taxon>
    </lineage>
</organism>
<protein>
    <recommendedName>
        <fullName evidence="1">Probable transcriptional regulatory protein NGO_1291</fullName>
    </recommendedName>
</protein>
<reference key="1">
    <citation type="submission" date="2003-03" db="EMBL/GenBank/DDBJ databases">
        <title>The complete genome sequence of Neisseria gonorrhoeae.</title>
        <authorList>
            <person name="Lewis L.A."/>
            <person name="Gillaspy A.F."/>
            <person name="McLaughlin R.E."/>
            <person name="Gipson M."/>
            <person name="Ducey T.F."/>
            <person name="Ownbey T."/>
            <person name="Hartman K."/>
            <person name="Nydick C."/>
            <person name="Carson M.B."/>
            <person name="Vaughn J."/>
            <person name="Thomson C."/>
            <person name="Song L."/>
            <person name="Lin S."/>
            <person name="Yuan X."/>
            <person name="Najar F."/>
            <person name="Zhan M."/>
            <person name="Ren Q."/>
            <person name="Zhu H."/>
            <person name="Qi S."/>
            <person name="Kenton S.M."/>
            <person name="Lai H."/>
            <person name="White J.D."/>
            <person name="Clifton S."/>
            <person name="Roe B.A."/>
            <person name="Dyer D.W."/>
        </authorList>
    </citation>
    <scope>NUCLEOTIDE SEQUENCE [LARGE SCALE GENOMIC DNA]</scope>
    <source>
        <strain>ATCC 700825 / FA 1090</strain>
    </source>
</reference>
<keyword id="KW-0963">Cytoplasm</keyword>
<keyword id="KW-0238">DNA-binding</keyword>
<keyword id="KW-1185">Reference proteome</keyword>
<keyword id="KW-0804">Transcription</keyword>
<keyword id="KW-0805">Transcription regulation</keyword>
<comment type="subcellular location">
    <subcellularLocation>
        <location evidence="1">Cytoplasm</location>
    </subcellularLocation>
</comment>
<comment type="similarity">
    <text evidence="1">Belongs to the TACO1 family.</text>
</comment>
<name>Y1291_NEIG1</name>
<proteinExistence type="inferred from homology"/>
<accession>Q5F792</accession>
<sequence>MAGHSKWANIQHKKARQDAKRGKIFTRLIKEITVAARMGGGDPGANPRLRLALEKAAENNMPKDNVQRAIDKGTGNLEGVEYIELRYEGYGIGGAALMVDCLTDNKTRTVADVRHAFTKNGGNLGTDGCVAFNFVHQGYLVFEPGVDEDELMEAALEAGAEDVVTNDDGSIEVITAPNDWAGVKSALEAAGYKSVDGDVTMRAQNETELSGDDAVKMQKLIDALEDLDDVQDVYTSAVLNLD</sequence>
<feature type="chain" id="PRO_0000175854" description="Probable transcriptional regulatory protein NGO_1291">
    <location>
        <begin position="1"/>
        <end position="242"/>
    </location>
</feature>
<dbReference type="EMBL" id="AE004969">
    <property type="protein sequence ID" value="AAW89945.1"/>
    <property type="molecule type" value="Genomic_DNA"/>
</dbReference>
<dbReference type="RefSeq" id="WP_003689207.1">
    <property type="nucleotide sequence ID" value="NC_002946.2"/>
</dbReference>
<dbReference type="RefSeq" id="YP_208357.1">
    <property type="nucleotide sequence ID" value="NC_002946.2"/>
</dbReference>
<dbReference type="SMR" id="Q5F792"/>
<dbReference type="STRING" id="242231.NGO_1291"/>
<dbReference type="KEGG" id="ngo:NGO_1291"/>
<dbReference type="PATRIC" id="fig|242231.10.peg.1517"/>
<dbReference type="HOGENOM" id="CLU_062974_2_2_4"/>
<dbReference type="Proteomes" id="UP000000535">
    <property type="component" value="Chromosome"/>
</dbReference>
<dbReference type="GO" id="GO:0005829">
    <property type="term" value="C:cytosol"/>
    <property type="evidence" value="ECO:0007669"/>
    <property type="project" value="TreeGrafter"/>
</dbReference>
<dbReference type="GO" id="GO:0003677">
    <property type="term" value="F:DNA binding"/>
    <property type="evidence" value="ECO:0007669"/>
    <property type="project" value="UniProtKB-UniRule"/>
</dbReference>
<dbReference type="GO" id="GO:0006355">
    <property type="term" value="P:regulation of DNA-templated transcription"/>
    <property type="evidence" value="ECO:0007669"/>
    <property type="project" value="UniProtKB-UniRule"/>
</dbReference>
<dbReference type="FunFam" id="1.10.10.200:FF:000001">
    <property type="entry name" value="Probable transcriptional regulatory protein YebC"/>
    <property type="match status" value="1"/>
</dbReference>
<dbReference type="FunFam" id="3.30.70.980:FF:000002">
    <property type="entry name" value="Probable transcriptional regulatory protein YebC"/>
    <property type="match status" value="1"/>
</dbReference>
<dbReference type="Gene3D" id="1.10.10.200">
    <property type="match status" value="1"/>
</dbReference>
<dbReference type="Gene3D" id="3.30.70.980">
    <property type="match status" value="2"/>
</dbReference>
<dbReference type="HAMAP" id="MF_00693">
    <property type="entry name" value="Transcrip_reg_TACO1"/>
    <property type="match status" value="1"/>
</dbReference>
<dbReference type="InterPro" id="IPR017856">
    <property type="entry name" value="Integrase-like_N"/>
</dbReference>
<dbReference type="InterPro" id="IPR048300">
    <property type="entry name" value="TACO1_YebC-like_2nd/3rd_dom"/>
</dbReference>
<dbReference type="InterPro" id="IPR049083">
    <property type="entry name" value="TACO1_YebC_N"/>
</dbReference>
<dbReference type="InterPro" id="IPR002876">
    <property type="entry name" value="Transcrip_reg_TACO1-like"/>
</dbReference>
<dbReference type="InterPro" id="IPR026564">
    <property type="entry name" value="Transcrip_reg_TACO1-like_dom3"/>
</dbReference>
<dbReference type="InterPro" id="IPR029072">
    <property type="entry name" value="YebC-like"/>
</dbReference>
<dbReference type="NCBIfam" id="NF001030">
    <property type="entry name" value="PRK00110.1"/>
    <property type="match status" value="1"/>
</dbReference>
<dbReference type="NCBIfam" id="NF009044">
    <property type="entry name" value="PRK12378.1"/>
    <property type="match status" value="1"/>
</dbReference>
<dbReference type="NCBIfam" id="TIGR01033">
    <property type="entry name" value="YebC/PmpR family DNA-binding transcriptional regulator"/>
    <property type="match status" value="1"/>
</dbReference>
<dbReference type="PANTHER" id="PTHR12532:SF6">
    <property type="entry name" value="TRANSCRIPTIONAL REGULATORY PROTEIN YEBC-RELATED"/>
    <property type="match status" value="1"/>
</dbReference>
<dbReference type="PANTHER" id="PTHR12532">
    <property type="entry name" value="TRANSLATIONAL ACTIVATOR OF CYTOCHROME C OXIDASE 1"/>
    <property type="match status" value="1"/>
</dbReference>
<dbReference type="Pfam" id="PF20772">
    <property type="entry name" value="TACO1_YebC_N"/>
    <property type="match status" value="1"/>
</dbReference>
<dbReference type="Pfam" id="PF01709">
    <property type="entry name" value="Transcrip_reg"/>
    <property type="match status" value="1"/>
</dbReference>
<dbReference type="SUPFAM" id="SSF75625">
    <property type="entry name" value="YebC-like"/>
    <property type="match status" value="1"/>
</dbReference>